<evidence type="ECO:0000255" key="1">
    <source>
        <dbReference type="HAMAP-Rule" id="MF_00178"/>
    </source>
</evidence>
<feature type="chain" id="PRO_1000077225" description="6,7-dimethyl-8-ribityllumazine synthase">
    <location>
        <begin position="1"/>
        <end position="161"/>
    </location>
</feature>
<feature type="active site" description="Proton donor" evidence="1">
    <location>
        <position position="93"/>
    </location>
</feature>
<feature type="binding site" evidence="1">
    <location>
        <position position="31"/>
    </location>
    <ligand>
        <name>5-amino-6-(D-ribitylamino)uracil</name>
        <dbReference type="ChEBI" id="CHEBI:15934"/>
    </ligand>
</feature>
<feature type="binding site" evidence="1">
    <location>
        <begin position="63"/>
        <end position="65"/>
    </location>
    <ligand>
        <name>5-amino-6-(D-ribitylamino)uracil</name>
        <dbReference type="ChEBI" id="CHEBI:15934"/>
    </ligand>
</feature>
<feature type="binding site" evidence="1">
    <location>
        <begin position="85"/>
        <end position="87"/>
    </location>
    <ligand>
        <name>5-amino-6-(D-ribitylamino)uracil</name>
        <dbReference type="ChEBI" id="CHEBI:15934"/>
    </ligand>
</feature>
<feature type="binding site" evidence="1">
    <location>
        <begin position="90"/>
        <end position="91"/>
    </location>
    <ligand>
        <name>(2S)-2-hydroxy-3-oxobutyl phosphate</name>
        <dbReference type="ChEBI" id="CHEBI:58830"/>
    </ligand>
</feature>
<feature type="binding site" evidence="1">
    <location>
        <position position="118"/>
    </location>
    <ligand>
        <name>5-amino-6-(D-ribitylamino)uracil</name>
        <dbReference type="ChEBI" id="CHEBI:15934"/>
    </ligand>
</feature>
<feature type="binding site" evidence="1">
    <location>
        <position position="132"/>
    </location>
    <ligand>
        <name>(2S)-2-hydroxy-3-oxobutyl phosphate</name>
        <dbReference type="ChEBI" id="CHEBI:58830"/>
    </ligand>
</feature>
<proteinExistence type="inferred from homology"/>
<sequence length="161" mass="16591">MSGHGAPEIDLTTLNPAETSQLKLAIVAASWHTQIMDGLLDGALRAAKDAGISEPTVLRVPGSFELPVAAARLAKHFDAVVALGVVIRGGTPHFEYVCEAATMGLTDVSVNTGVPVGFGVLTCDTEQQGLDRAGLPGSKEDKGHEAVTAALATAVTLKQYS</sequence>
<gene>
    <name evidence="1" type="primary">ribH</name>
    <name type="ordered locus">Arth_1678</name>
</gene>
<organism>
    <name type="scientific">Arthrobacter sp. (strain FB24)</name>
    <dbReference type="NCBI Taxonomy" id="290399"/>
    <lineage>
        <taxon>Bacteria</taxon>
        <taxon>Bacillati</taxon>
        <taxon>Actinomycetota</taxon>
        <taxon>Actinomycetes</taxon>
        <taxon>Micrococcales</taxon>
        <taxon>Micrococcaceae</taxon>
        <taxon>Arthrobacter</taxon>
    </lineage>
</organism>
<dbReference type="EC" id="2.5.1.78" evidence="1"/>
<dbReference type="EMBL" id="CP000454">
    <property type="protein sequence ID" value="ABK03072.1"/>
    <property type="molecule type" value="Genomic_DNA"/>
</dbReference>
<dbReference type="RefSeq" id="WP_011691538.1">
    <property type="nucleotide sequence ID" value="NC_008541.1"/>
</dbReference>
<dbReference type="SMR" id="A0JVK2"/>
<dbReference type="STRING" id="290399.Arth_1678"/>
<dbReference type="KEGG" id="art:Arth_1678"/>
<dbReference type="eggNOG" id="COG0054">
    <property type="taxonomic scope" value="Bacteria"/>
</dbReference>
<dbReference type="HOGENOM" id="CLU_089358_1_2_11"/>
<dbReference type="OrthoDB" id="9809709at2"/>
<dbReference type="UniPathway" id="UPA00275">
    <property type="reaction ID" value="UER00404"/>
</dbReference>
<dbReference type="Proteomes" id="UP000000754">
    <property type="component" value="Chromosome"/>
</dbReference>
<dbReference type="GO" id="GO:0005829">
    <property type="term" value="C:cytosol"/>
    <property type="evidence" value="ECO:0007669"/>
    <property type="project" value="TreeGrafter"/>
</dbReference>
<dbReference type="GO" id="GO:0009349">
    <property type="term" value="C:riboflavin synthase complex"/>
    <property type="evidence" value="ECO:0007669"/>
    <property type="project" value="InterPro"/>
</dbReference>
<dbReference type="GO" id="GO:0000906">
    <property type="term" value="F:6,7-dimethyl-8-ribityllumazine synthase activity"/>
    <property type="evidence" value="ECO:0007669"/>
    <property type="project" value="UniProtKB-UniRule"/>
</dbReference>
<dbReference type="GO" id="GO:0009231">
    <property type="term" value="P:riboflavin biosynthetic process"/>
    <property type="evidence" value="ECO:0007669"/>
    <property type="project" value="UniProtKB-UniRule"/>
</dbReference>
<dbReference type="CDD" id="cd09209">
    <property type="entry name" value="Lumazine_synthase-I"/>
    <property type="match status" value="1"/>
</dbReference>
<dbReference type="FunFam" id="3.40.50.960:FF:000002">
    <property type="entry name" value="6,7-dimethyl-8-ribityllumazine synthase"/>
    <property type="match status" value="1"/>
</dbReference>
<dbReference type="Gene3D" id="3.40.50.960">
    <property type="entry name" value="Lumazine/riboflavin synthase"/>
    <property type="match status" value="1"/>
</dbReference>
<dbReference type="HAMAP" id="MF_00178">
    <property type="entry name" value="Lumazine_synth"/>
    <property type="match status" value="1"/>
</dbReference>
<dbReference type="InterPro" id="IPR034964">
    <property type="entry name" value="LS"/>
</dbReference>
<dbReference type="InterPro" id="IPR002180">
    <property type="entry name" value="LS/RS"/>
</dbReference>
<dbReference type="InterPro" id="IPR036467">
    <property type="entry name" value="LS/RS_sf"/>
</dbReference>
<dbReference type="NCBIfam" id="TIGR00114">
    <property type="entry name" value="lumazine-synth"/>
    <property type="match status" value="1"/>
</dbReference>
<dbReference type="PANTHER" id="PTHR21058:SF0">
    <property type="entry name" value="6,7-DIMETHYL-8-RIBITYLLUMAZINE SYNTHASE"/>
    <property type="match status" value="1"/>
</dbReference>
<dbReference type="PANTHER" id="PTHR21058">
    <property type="entry name" value="6,7-DIMETHYL-8-RIBITYLLUMAZINE SYNTHASE DMRL SYNTHASE LUMAZINE SYNTHASE"/>
    <property type="match status" value="1"/>
</dbReference>
<dbReference type="Pfam" id="PF00885">
    <property type="entry name" value="DMRL_synthase"/>
    <property type="match status" value="1"/>
</dbReference>
<dbReference type="SUPFAM" id="SSF52121">
    <property type="entry name" value="Lumazine synthase"/>
    <property type="match status" value="1"/>
</dbReference>
<name>RISB_ARTS2</name>
<comment type="function">
    <text evidence="1">Catalyzes the formation of 6,7-dimethyl-8-ribityllumazine by condensation of 5-amino-6-(D-ribitylamino)uracil with 3,4-dihydroxy-2-butanone 4-phosphate. This is the penultimate step in the biosynthesis of riboflavin.</text>
</comment>
<comment type="catalytic activity">
    <reaction evidence="1">
        <text>(2S)-2-hydroxy-3-oxobutyl phosphate + 5-amino-6-(D-ribitylamino)uracil = 6,7-dimethyl-8-(1-D-ribityl)lumazine + phosphate + 2 H2O + H(+)</text>
        <dbReference type="Rhea" id="RHEA:26152"/>
        <dbReference type="ChEBI" id="CHEBI:15377"/>
        <dbReference type="ChEBI" id="CHEBI:15378"/>
        <dbReference type="ChEBI" id="CHEBI:15934"/>
        <dbReference type="ChEBI" id="CHEBI:43474"/>
        <dbReference type="ChEBI" id="CHEBI:58201"/>
        <dbReference type="ChEBI" id="CHEBI:58830"/>
        <dbReference type="EC" id="2.5.1.78"/>
    </reaction>
</comment>
<comment type="pathway">
    <text evidence="1">Cofactor biosynthesis; riboflavin biosynthesis; riboflavin from 2-hydroxy-3-oxobutyl phosphate and 5-amino-6-(D-ribitylamino)uracil: step 1/2.</text>
</comment>
<comment type="similarity">
    <text evidence="1">Belongs to the DMRL synthase family.</text>
</comment>
<protein>
    <recommendedName>
        <fullName evidence="1">6,7-dimethyl-8-ribityllumazine synthase</fullName>
        <shortName evidence="1">DMRL synthase</shortName>
        <shortName evidence="1">LS</shortName>
        <shortName evidence="1">Lumazine synthase</shortName>
        <ecNumber evidence="1">2.5.1.78</ecNumber>
    </recommendedName>
</protein>
<reference key="1">
    <citation type="journal article" date="2013" name="Stand. Genomic Sci.">
        <title>Complete genome sequence of Arthrobacter sp. strain FB24.</title>
        <authorList>
            <person name="Nakatsu C.H."/>
            <person name="Barabote R."/>
            <person name="Thompson S."/>
            <person name="Bruce D."/>
            <person name="Detter C."/>
            <person name="Brettin T."/>
            <person name="Han C."/>
            <person name="Beasley F."/>
            <person name="Chen W."/>
            <person name="Konopka A."/>
            <person name="Xie G."/>
        </authorList>
    </citation>
    <scope>NUCLEOTIDE SEQUENCE [LARGE SCALE GENOMIC DNA]</scope>
    <source>
        <strain>FB24</strain>
    </source>
</reference>
<keyword id="KW-1185">Reference proteome</keyword>
<keyword id="KW-0686">Riboflavin biosynthesis</keyword>
<keyword id="KW-0808">Transferase</keyword>
<accession>A0JVK2</accession>